<sequence>MSNNTNKQYTTQELNSMSNDDLARLGTELDDVTIAYRKERFPVANDPAEKRAARSVGIWAALGILGGIGFLITYIFWPWEYQGHGDDGLMWYTLYTPMLGITSGLCIISLGIAGVLYVKKFIPEEIAVQRRHDGPSEEVDRRTLVALLNDSWQTSTLGRRKVLQGLLAGGAVMAGLTIVAPLGGMIKNPWRPQDGPMDVMGDGTLWTSGWTLQEQGVKLYLGRDTGAIAESHTGESGQHWITTGVSRLVRMRPEDLAAASMETVFPLPAEDVNDGDLYDPQRDVYTNHMHSIHGPRNAVMLIRLRTADAERVIEREGQESFHYGDYYAYSKICTHIGCPTSLYEAQTNRILCPCHQSQFDALHYGKPVFGPAARALPQLPITVDEEGYLIADGNFIEPLGPAFWERKS</sequence>
<organism>
    <name type="scientific">Corynebacterium efficiens (strain DSM 44549 / YS-314 / AJ 12310 / JCM 11189 / NBRC 100395)</name>
    <dbReference type="NCBI Taxonomy" id="196164"/>
    <lineage>
        <taxon>Bacteria</taxon>
        <taxon>Bacillati</taxon>
        <taxon>Actinomycetota</taxon>
        <taxon>Actinomycetes</taxon>
        <taxon>Mycobacteriales</taxon>
        <taxon>Corynebacteriaceae</taxon>
        <taxon>Corynebacterium</taxon>
    </lineage>
</organism>
<keyword id="KW-0001">2Fe-2S</keyword>
<keyword id="KW-1003">Cell membrane</keyword>
<keyword id="KW-1015">Disulfide bond</keyword>
<keyword id="KW-0249">Electron transport</keyword>
<keyword id="KW-0408">Iron</keyword>
<keyword id="KW-0411">Iron-sulfur</keyword>
<keyword id="KW-0472">Membrane</keyword>
<keyword id="KW-0479">Metal-binding</keyword>
<keyword id="KW-0560">Oxidoreductase</keyword>
<keyword id="KW-1185">Reference proteome</keyword>
<keyword id="KW-0679">Respiratory chain</keyword>
<keyword id="KW-0812">Transmembrane</keyword>
<keyword id="KW-1133">Transmembrane helix</keyword>
<keyword id="KW-0813">Transport</keyword>
<reference key="1">
    <citation type="journal article" date="2003" name="Genome Res.">
        <title>Comparative complete genome sequence analysis of the amino acid replacements responsible for the thermostability of Corynebacterium efficiens.</title>
        <authorList>
            <person name="Nishio Y."/>
            <person name="Nakamura Y."/>
            <person name="Kawarabayasi Y."/>
            <person name="Usuda Y."/>
            <person name="Kimura E."/>
            <person name="Sugimoto S."/>
            <person name="Matsui K."/>
            <person name="Yamagishi A."/>
            <person name="Kikuchi H."/>
            <person name="Ikeo K."/>
            <person name="Gojobori T."/>
        </authorList>
    </citation>
    <scope>NUCLEOTIDE SEQUENCE [LARGE SCALE GENOMIC DNA]</scope>
    <source>
        <strain>DSM 44549 / YS-314 / AJ 12310 / JCM 11189 / NBRC 100395</strain>
    </source>
</reference>
<proteinExistence type="inferred from homology"/>
<comment type="function">
    <text evidence="1">Iron-sulfur subunit of the cytochrome bc1 complex, an essential component of the respiratory electron transport chain required for ATP synthesis. The bc1 complex catalyzes the oxidation of menaquinol and the reduction of cytochrome c in the respiratory chain. The bc1 complex operates through a Q-cycle mechanism that couples electron transfer to generation of the proton gradient that drives ATP synthesis.</text>
</comment>
<comment type="cofactor">
    <cofactor evidence="3">
        <name>[2Fe-2S] cluster</name>
        <dbReference type="ChEBI" id="CHEBI:190135"/>
    </cofactor>
    <text evidence="3">Binds 1 [2Fe-2S] cluster per subunit.</text>
</comment>
<comment type="subunit">
    <text evidence="1">The cytochrome bc1 complex is composed of a cytochrome b (QcrB), the Rieske iron-sulfur protein (QcrA) and a diheme cytochrome c (QcrC) subunit. The bc1 complex forms a supercomplex with cytochrome c oxidase (cytochrome aa3).</text>
</comment>
<comment type="subcellular location">
    <subcellularLocation>
        <location evidence="2">Cell membrane</location>
        <topology evidence="2">Multi-pass membrane protein</topology>
    </subcellularLocation>
</comment>
<comment type="similarity">
    <text evidence="4">Belongs to the Rieske iron-sulfur protein family.</text>
</comment>
<feature type="chain" id="PRO_0000127789" description="Cytochrome bc1 complex Rieske iron-sulfur subunit">
    <location>
        <begin position="1"/>
        <end position="408"/>
    </location>
</feature>
<feature type="transmembrane region" description="Helical" evidence="2">
    <location>
        <begin position="56"/>
        <end position="76"/>
    </location>
</feature>
<feature type="transmembrane region" description="Helical" evidence="2">
    <location>
        <begin position="98"/>
        <end position="118"/>
    </location>
</feature>
<feature type="transmembrane region" description="Helical" evidence="2">
    <location>
        <begin position="166"/>
        <end position="186"/>
    </location>
</feature>
<feature type="domain" description="Rieske" evidence="3">
    <location>
        <begin position="293"/>
        <end position="390"/>
    </location>
</feature>
<feature type="binding site" evidence="3">
    <location>
        <position position="333"/>
    </location>
    <ligand>
        <name>[2Fe-2S] cluster</name>
        <dbReference type="ChEBI" id="CHEBI:190135"/>
    </ligand>
</feature>
<feature type="binding site" evidence="3">
    <location>
        <position position="335"/>
    </location>
    <ligand>
        <name>[2Fe-2S] cluster</name>
        <dbReference type="ChEBI" id="CHEBI:190135"/>
    </ligand>
</feature>
<feature type="binding site" evidence="3">
    <location>
        <position position="352"/>
    </location>
    <ligand>
        <name>[2Fe-2S] cluster</name>
        <dbReference type="ChEBI" id="CHEBI:190135"/>
    </ligand>
</feature>
<feature type="binding site" evidence="3">
    <location>
        <position position="355"/>
    </location>
    <ligand>
        <name>[2Fe-2S] cluster</name>
        <dbReference type="ChEBI" id="CHEBI:190135"/>
    </ligand>
</feature>
<feature type="disulfide bond" evidence="3">
    <location>
        <begin position="338"/>
        <end position="354"/>
    </location>
</feature>
<protein>
    <recommendedName>
        <fullName>Cytochrome bc1 complex Rieske iron-sulfur subunit</fullName>
    </recommendedName>
    <alternativeName>
        <fullName>Cytochrome bc1 reductase complex subunit QcrA</fullName>
    </alternativeName>
    <alternativeName>
        <fullName>Menaquinol--cytochrome c reductase iron-sulfur subunit</fullName>
    </alternativeName>
    <alternativeName>
        <fullName>Rieske iron-sulfur protein</fullName>
    </alternativeName>
</protein>
<gene>
    <name type="primary">qcrA</name>
    <name type="ordered locus">CE2083</name>
</gene>
<evidence type="ECO:0000250" key="1">
    <source>
        <dbReference type="UniProtKB" id="Q79VE8"/>
    </source>
</evidence>
<evidence type="ECO:0000255" key="2"/>
<evidence type="ECO:0000255" key="3">
    <source>
        <dbReference type="PROSITE-ProRule" id="PRU00628"/>
    </source>
</evidence>
<evidence type="ECO:0000305" key="4"/>
<dbReference type="EMBL" id="BA000035">
    <property type="protein sequence ID" value="BAC18893.1"/>
    <property type="molecule type" value="Genomic_DNA"/>
</dbReference>
<dbReference type="RefSeq" id="WP_006768084.1">
    <property type="nucleotide sequence ID" value="NC_004369.1"/>
</dbReference>
<dbReference type="SMR" id="Q8FNR1"/>
<dbReference type="STRING" id="196164.gene:10742511"/>
<dbReference type="KEGG" id="cef:CE2083"/>
<dbReference type="eggNOG" id="COG0723">
    <property type="taxonomic scope" value="Bacteria"/>
</dbReference>
<dbReference type="HOGENOM" id="CLU_050668_0_0_11"/>
<dbReference type="OrthoDB" id="9802613at2"/>
<dbReference type="Proteomes" id="UP000001409">
    <property type="component" value="Chromosome"/>
</dbReference>
<dbReference type="GO" id="GO:0005886">
    <property type="term" value="C:plasma membrane"/>
    <property type="evidence" value="ECO:0007669"/>
    <property type="project" value="UniProtKB-SubCell"/>
</dbReference>
<dbReference type="GO" id="GO:0051537">
    <property type="term" value="F:2 iron, 2 sulfur cluster binding"/>
    <property type="evidence" value="ECO:0007669"/>
    <property type="project" value="UniProtKB-KW"/>
</dbReference>
<dbReference type="GO" id="GO:0046872">
    <property type="term" value="F:metal ion binding"/>
    <property type="evidence" value="ECO:0007669"/>
    <property type="project" value="UniProtKB-KW"/>
</dbReference>
<dbReference type="GO" id="GO:0004497">
    <property type="term" value="F:monooxygenase activity"/>
    <property type="evidence" value="ECO:0007669"/>
    <property type="project" value="UniProtKB-ARBA"/>
</dbReference>
<dbReference type="GO" id="GO:0016705">
    <property type="term" value="F:oxidoreductase activity, acting on paired donors, with incorporation or reduction of molecular oxygen"/>
    <property type="evidence" value="ECO:0007669"/>
    <property type="project" value="UniProtKB-ARBA"/>
</dbReference>
<dbReference type="CDD" id="cd03467">
    <property type="entry name" value="Rieske"/>
    <property type="match status" value="1"/>
</dbReference>
<dbReference type="Gene3D" id="2.102.10.10">
    <property type="entry name" value="Rieske [2Fe-2S] iron-sulphur domain"/>
    <property type="match status" value="1"/>
</dbReference>
<dbReference type="InterPro" id="IPR045603">
    <property type="entry name" value="QcrA_N"/>
</dbReference>
<dbReference type="InterPro" id="IPR017941">
    <property type="entry name" value="Rieske_2Fe-2S"/>
</dbReference>
<dbReference type="InterPro" id="IPR036922">
    <property type="entry name" value="Rieske_2Fe-2S_sf"/>
</dbReference>
<dbReference type="InterPro" id="IPR014349">
    <property type="entry name" value="Rieske_Fe-S_prot"/>
</dbReference>
<dbReference type="PANTHER" id="PTHR10134">
    <property type="entry name" value="CYTOCHROME B-C1 COMPLEX SUBUNIT RIESKE, MITOCHONDRIAL"/>
    <property type="match status" value="1"/>
</dbReference>
<dbReference type="Pfam" id="PF19297">
    <property type="entry name" value="QcrA_N"/>
    <property type="match status" value="1"/>
</dbReference>
<dbReference type="Pfam" id="PF00355">
    <property type="entry name" value="Rieske"/>
    <property type="match status" value="1"/>
</dbReference>
<dbReference type="SUPFAM" id="SSF50022">
    <property type="entry name" value="ISP domain"/>
    <property type="match status" value="1"/>
</dbReference>
<dbReference type="PROSITE" id="PS51296">
    <property type="entry name" value="RIESKE"/>
    <property type="match status" value="1"/>
</dbReference>
<name>QCRA_COREF</name>
<accession>Q8FNR1</accession>